<name>VE1_HPV60</name>
<keyword id="KW-0067">ATP-binding</keyword>
<keyword id="KW-0235">DNA replication</keyword>
<keyword id="KW-0238">DNA-binding</keyword>
<keyword id="KW-0244">Early protein</keyword>
<keyword id="KW-0347">Helicase</keyword>
<keyword id="KW-1048">Host nucleus</keyword>
<keyword id="KW-0378">Hydrolase</keyword>
<keyword id="KW-0413">Isomerase</keyword>
<keyword id="KW-1017">Isopeptide bond</keyword>
<keyword id="KW-0547">Nucleotide-binding</keyword>
<keyword id="KW-0597">Phosphoprotein</keyword>
<keyword id="KW-1185">Reference proteome</keyword>
<keyword id="KW-0832">Ubl conjugation</keyword>
<evidence type="ECO:0000255" key="1">
    <source>
        <dbReference type="HAMAP-Rule" id="MF_04000"/>
    </source>
</evidence>
<evidence type="ECO:0000256" key="2">
    <source>
        <dbReference type="SAM" id="MobiDB-lite"/>
    </source>
</evidence>
<gene>
    <name evidence="1" type="primary">E1</name>
</gene>
<protein>
    <recommendedName>
        <fullName evidence="1">Replication protein E1</fullName>
        <ecNumber evidence="1">5.6.2.4</ecNumber>
    </recommendedName>
    <alternativeName>
        <fullName evidence="1">ATP-dependent helicase E1</fullName>
    </alternativeName>
    <alternativeName>
        <fullName evidence="1">DNA 3'-5' helicase E1</fullName>
    </alternativeName>
</protein>
<comment type="function">
    <text evidence="1">ATP-dependent DNA 3'-5' helicase required for initiation of viral DNA replication. It forms a complex with the viral E2 protein. The E1-E2 complex binds to the replication origin which contains binding sites for both proteins. During the initial step, a dimer of E1 interacts with a dimer of protein E2 leading to a complex that binds the viral origin of replication with high specificity. Then, a second dimer of E1 displaces the E2 dimer in an ATP-dependent manner to form the E1 tetramer. Following this, two E1 monomers are added to each half of the site, which results in the formation of two E1 trimers on the viral ori. Subsequently, two hexamers will be created. The double hexamer acts as a bi-directional helicase machinery and unwinds the viral DNA and then recruits the host DNA polymerase to start replication.</text>
</comment>
<comment type="catalytic activity">
    <reaction evidence="1">
        <text>Couples ATP hydrolysis with the unwinding of duplex DNA by translocating in the 3'-5' direction.</text>
        <dbReference type="EC" id="5.6.2.4"/>
    </reaction>
</comment>
<comment type="catalytic activity">
    <reaction evidence="1">
        <text>ATP + H2O = ADP + phosphate + H(+)</text>
        <dbReference type="Rhea" id="RHEA:13065"/>
        <dbReference type="ChEBI" id="CHEBI:15377"/>
        <dbReference type="ChEBI" id="CHEBI:15378"/>
        <dbReference type="ChEBI" id="CHEBI:30616"/>
        <dbReference type="ChEBI" id="CHEBI:43474"/>
        <dbReference type="ChEBI" id="CHEBI:456216"/>
        <dbReference type="EC" id="5.6.2.4"/>
    </reaction>
</comment>
<comment type="subunit">
    <text evidence="1">Can form hexamers. Interacts with E2 protein; this interaction increases E1 DNA binding specificity. Interacts with host DNA polymerase subunit POLA2. Interacts with host single stranded DNA-binding protein RPA1. Interacts with host TOP1; this interaction stimulates the enzymatic activity of TOP1.</text>
</comment>
<comment type="subcellular location">
    <subcellularLocation>
        <location evidence="1">Host nucleus</location>
    </subcellularLocation>
</comment>
<comment type="PTM">
    <text evidence="1">Phosphorylated.</text>
</comment>
<comment type="PTM">
    <text evidence="1">Sumoylated.</text>
</comment>
<comment type="similarity">
    <text evidence="1">Belongs to the papillomaviridae E1 protein family.</text>
</comment>
<organism>
    <name type="scientific">Human papillomavirus type 60</name>
    <dbReference type="NCBI Taxonomy" id="40540"/>
    <lineage>
        <taxon>Viruses</taxon>
        <taxon>Monodnaviria</taxon>
        <taxon>Shotokuvirae</taxon>
        <taxon>Cossaviricota</taxon>
        <taxon>Papovaviricetes</taxon>
        <taxon>Zurhausenvirales</taxon>
        <taxon>Papillomaviridae</taxon>
        <taxon>Firstpapillomavirinae</taxon>
        <taxon>Gammapapillomavirus</taxon>
        <taxon>Gammapapillomavirus 4</taxon>
    </lineage>
</organism>
<dbReference type="EC" id="5.6.2.4" evidence="1"/>
<dbReference type="EMBL" id="U31792">
    <property type="protein sequence ID" value="AAA79487.1"/>
    <property type="molecule type" value="Genomic_DNA"/>
</dbReference>
<dbReference type="RefSeq" id="NP_043439.1">
    <property type="nucleotide sequence ID" value="NC_001693.1"/>
</dbReference>
<dbReference type="SMR" id="Q80943"/>
<dbReference type="GeneID" id="1403640"/>
<dbReference type="KEGG" id="vg:1403640"/>
<dbReference type="OrthoDB" id="4795at10239"/>
<dbReference type="Proteomes" id="UP000120507">
    <property type="component" value="Genome"/>
</dbReference>
<dbReference type="GO" id="GO:0042025">
    <property type="term" value="C:host cell nucleus"/>
    <property type="evidence" value="ECO:0007669"/>
    <property type="project" value="UniProtKB-SubCell"/>
</dbReference>
<dbReference type="GO" id="GO:0005524">
    <property type="term" value="F:ATP binding"/>
    <property type="evidence" value="ECO:0007669"/>
    <property type="project" value="UniProtKB-UniRule"/>
</dbReference>
<dbReference type="GO" id="GO:0016887">
    <property type="term" value="F:ATP hydrolysis activity"/>
    <property type="evidence" value="ECO:0007669"/>
    <property type="project" value="RHEA"/>
</dbReference>
<dbReference type="GO" id="GO:0003677">
    <property type="term" value="F:DNA binding"/>
    <property type="evidence" value="ECO:0007669"/>
    <property type="project" value="UniProtKB-UniRule"/>
</dbReference>
<dbReference type="GO" id="GO:0003678">
    <property type="term" value="F:DNA helicase activity"/>
    <property type="evidence" value="ECO:0007669"/>
    <property type="project" value="UniProtKB-UniRule"/>
</dbReference>
<dbReference type="GO" id="GO:0006260">
    <property type="term" value="P:DNA replication"/>
    <property type="evidence" value="ECO:0007669"/>
    <property type="project" value="UniProtKB-UniRule"/>
</dbReference>
<dbReference type="Gene3D" id="3.40.1310.10">
    <property type="match status" value="1"/>
</dbReference>
<dbReference type="Gene3D" id="3.40.50.300">
    <property type="entry name" value="P-loop containing nucleotide triphosphate hydrolases"/>
    <property type="match status" value="1"/>
</dbReference>
<dbReference type="Gene3D" id="1.10.10.510">
    <property type="entry name" value="Zinc finger, large T-antigen D1 domain"/>
    <property type="match status" value="1"/>
</dbReference>
<dbReference type="HAMAP" id="MF_04000">
    <property type="entry name" value="PPV_E1"/>
    <property type="match status" value="1"/>
</dbReference>
<dbReference type="InterPro" id="IPR014015">
    <property type="entry name" value="Helicase_SF3_DNA-vir"/>
</dbReference>
<dbReference type="InterPro" id="IPR027417">
    <property type="entry name" value="P-loop_NTPase"/>
</dbReference>
<dbReference type="InterPro" id="IPR001177">
    <property type="entry name" value="PPV_DNA_helicase_E1_C"/>
</dbReference>
<dbReference type="InterPro" id="IPR014000">
    <property type="entry name" value="PPV_DNA_helicase_E1_N"/>
</dbReference>
<dbReference type="InterPro" id="IPR046832">
    <property type="entry name" value="PPV_E1_DBD"/>
</dbReference>
<dbReference type="InterPro" id="IPR046935">
    <property type="entry name" value="PPV_E1_DBD_sf"/>
</dbReference>
<dbReference type="InterPro" id="IPR016393">
    <property type="entry name" value="Rep_E1_papillomaV"/>
</dbReference>
<dbReference type="InterPro" id="IPR037102">
    <property type="entry name" value="Znf_lg_T-Ag_D1_dom_sf"/>
</dbReference>
<dbReference type="Pfam" id="PF00519">
    <property type="entry name" value="PPV_E1_C"/>
    <property type="match status" value="1"/>
</dbReference>
<dbReference type="Pfam" id="PF20450">
    <property type="entry name" value="PPV_E1_DBD"/>
    <property type="match status" value="1"/>
</dbReference>
<dbReference type="Pfam" id="PF00524">
    <property type="entry name" value="PPV_E1_N"/>
    <property type="match status" value="1"/>
</dbReference>
<dbReference type="PIRSF" id="PIRSF003383">
    <property type="entry name" value="Rep_E1_papillomaV"/>
    <property type="match status" value="1"/>
</dbReference>
<dbReference type="SUPFAM" id="SSF55464">
    <property type="entry name" value="Origin of replication-binding domain, RBD-like"/>
    <property type="match status" value="1"/>
</dbReference>
<dbReference type="SUPFAM" id="SSF52540">
    <property type="entry name" value="P-loop containing nucleoside triphosphate hydrolases"/>
    <property type="match status" value="1"/>
</dbReference>
<dbReference type="PROSITE" id="PS51206">
    <property type="entry name" value="SF3_HELICASE_1"/>
    <property type="match status" value="1"/>
</dbReference>
<feature type="chain" id="PRO_0000133153" description="Replication protein E1">
    <location>
        <begin position="1"/>
        <end position="610"/>
    </location>
</feature>
<feature type="domain" description="SF3 helicase" evidence="1">
    <location>
        <begin position="411"/>
        <end position="561"/>
    </location>
</feature>
<feature type="region of interest" description="DNA-binding region" evidence="1">
    <location>
        <begin position="148"/>
        <end position="312"/>
    </location>
</feature>
<feature type="region of interest" description="Disordered" evidence="2">
    <location>
        <begin position="591"/>
        <end position="610"/>
    </location>
</feature>
<feature type="short sequence motif" description="Nuclear localization signal" evidence="1">
    <location>
        <begin position="83"/>
        <end position="85"/>
    </location>
</feature>
<feature type="short sequence motif" description="Nuclear export signal" evidence="1">
    <location>
        <begin position="101"/>
        <end position="110"/>
    </location>
</feature>
<feature type="binding site" evidence="1">
    <location>
        <begin position="437"/>
        <end position="444"/>
    </location>
    <ligand>
        <name>ATP</name>
        <dbReference type="ChEBI" id="CHEBI:30616"/>
    </ligand>
</feature>
<feature type="modified residue" description="Phosphoserine; by host" evidence="1">
    <location>
        <position position="93"/>
    </location>
</feature>
<feature type="modified residue" description="Phosphoserine; by host" evidence="1">
    <location>
        <position position="102"/>
    </location>
</feature>
<feature type="cross-link" description="Glycyl lysine isopeptide (Lys-Gly) (interchain with G-Cter in SUMO)" evidence="1">
    <location>
        <position position="518"/>
    </location>
</feature>
<proteinExistence type="inferred from homology"/>
<sequence>MADPNKGINSLELNEGHSEWYVVTEAECINSLDTMEELFEESTDGSIVSNLIDDSEELEEGNSLALYNEQLTEDCNRAILALKRKLTKTPLKSQDRTVADLSPRLEAVTISPQRQSKRRLFEDSGLGEDEATNSIEKKVVSNSLESNESGTLVVETDSIFRSTNRKATLLAKFKEYFGVAYGDLTRPFKSDRSCCENWVISVCAAAEEVIEASKTVMQQHCDFLQVISYGFYALYLVKFKTAKSRDTIMKLFSLTLNVQEQQLMCDPPKSRSTPTALYFYRRSFGNASFIYGPFPDWLAKLTMLDHESAASSEQFELAQMIQFAYDNNLTTESEIAYKYALLADSDANAAAFLKSNQQVKYVRDCYAMLRYYKRQEMKDMSISEWIWKCCDDCNQEGNWKLIAQFLRYQEVNFISFLCALKTLFKGIPKRNCLVFWGPPDTGKSYICSSLTRFMQGKVVSFMNRHSQFWLQPLQDCKLGFLDDATFQCWQYMDVNMRNALDGNHISLDLKHKAPLQIKLPPLLITTNVDVENEASLMYLKSRLVFFKFPNKLPLKENDEVLYEITDASWKCFFIKFASHLELTARGDEQHESGRSDRAFRCTAGTNTESI</sequence>
<organismHost>
    <name type="scientific">Homo sapiens</name>
    <name type="common">Human</name>
    <dbReference type="NCBI Taxonomy" id="9606"/>
</organismHost>
<reference key="1">
    <citation type="submission" date="1995-10" db="EMBL/GenBank/DDBJ databases">
        <authorList>
            <person name="Delius H."/>
        </authorList>
    </citation>
    <scope>NUCLEOTIDE SEQUENCE [GENOMIC DNA]</scope>
</reference>
<accession>Q80943</accession>